<protein>
    <recommendedName>
        <fullName>Stress response protein NST1</fullName>
    </recommendedName>
</protein>
<organism>
    <name type="scientific">Cryptococcus neoformans var. neoformans serotype D (strain B-3501A)</name>
    <name type="common">Filobasidiella neoformans</name>
    <dbReference type="NCBI Taxonomy" id="283643"/>
    <lineage>
        <taxon>Eukaryota</taxon>
        <taxon>Fungi</taxon>
        <taxon>Dikarya</taxon>
        <taxon>Basidiomycota</taxon>
        <taxon>Agaricomycotina</taxon>
        <taxon>Tremellomycetes</taxon>
        <taxon>Tremellales</taxon>
        <taxon>Cryptococcaceae</taxon>
        <taxon>Cryptococcus</taxon>
        <taxon>Cryptococcus neoformans species complex</taxon>
    </lineage>
</organism>
<proteinExistence type="inferred from homology"/>
<feature type="chain" id="PRO_0000410175" description="Stress response protein NST1">
    <location>
        <begin position="1"/>
        <end position="1353"/>
    </location>
</feature>
<feature type="region of interest" description="Disordered" evidence="3">
    <location>
        <begin position="1"/>
        <end position="66"/>
    </location>
</feature>
<feature type="region of interest" description="Disordered" evidence="3">
    <location>
        <begin position="216"/>
        <end position="422"/>
    </location>
</feature>
<feature type="region of interest" description="Disordered" evidence="3">
    <location>
        <begin position="503"/>
        <end position="522"/>
    </location>
</feature>
<feature type="region of interest" description="Disordered" evidence="3">
    <location>
        <begin position="531"/>
        <end position="618"/>
    </location>
</feature>
<feature type="region of interest" description="Disordered" evidence="3">
    <location>
        <begin position="652"/>
        <end position="694"/>
    </location>
</feature>
<feature type="region of interest" description="Disordered" evidence="3">
    <location>
        <begin position="727"/>
        <end position="882"/>
    </location>
</feature>
<feature type="region of interest" description="Disordered" evidence="3">
    <location>
        <begin position="979"/>
        <end position="1119"/>
    </location>
</feature>
<feature type="region of interest" description="Disordered" evidence="3">
    <location>
        <begin position="1140"/>
        <end position="1276"/>
    </location>
</feature>
<feature type="region of interest" description="Disordered" evidence="3">
    <location>
        <begin position="1308"/>
        <end position="1337"/>
    </location>
</feature>
<feature type="coiled-coil region" evidence="2">
    <location>
        <begin position="713"/>
        <end position="944"/>
    </location>
</feature>
<feature type="compositionally biased region" description="Polar residues" evidence="3">
    <location>
        <begin position="1"/>
        <end position="12"/>
    </location>
</feature>
<feature type="compositionally biased region" description="Basic residues" evidence="3">
    <location>
        <begin position="16"/>
        <end position="25"/>
    </location>
</feature>
<feature type="compositionally biased region" description="Low complexity" evidence="3">
    <location>
        <begin position="26"/>
        <end position="45"/>
    </location>
</feature>
<feature type="compositionally biased region" description="Pro residues" evidence="3">
    <location>
        <begin position="46"/>
        <end position="59"/>
    </location>
</feature>
<feature type="compositionally biased region" description="Polar residues" evidence="3">
    <location>
        <begin position="218"/>
        <end position="229"/>
    </location>
</feature>
<feature type="compositionally biased region" description="Acidic residues" evidence="3">
    <location>
        <begin position="242"/>
        <end position="254"/>
    </location>
</feature>
<feature type="compositionally biased region" description="Basic residues" evidence="3">
    <location>
        <begin position="268"/>
        <end position="277"/>
    </location>
</feature>
<feature type="compositionally biased region" description="Pro residues" evidence="3">
    <location>
        <begin position="287"/>
        <end position="300"/>
    </location>
</feature>
<feature type="compositionally biased region" description="Low complexity" evidence="3">
    <location>
        <begin position="317"/>
        <end position="330"/>
    </location>
</feature>
<feature type="compositionally biased region" description="Pro residues" evidence="3">
    <location>
        <begin position="331"/>
        <end position="349"/>
    </location>
</feature>
<feature type="compositionally biased region" description="Low complexity" evidence="3">
    <location>
        <begin position="368"/>
        <end position="388"/>
    </location>
</feature>
<feature type="compositionally biased region" description="Basic and acidic residues" evidence="3">
    <location>
        <begin position="531"/>
        <end position="541"/>
    </location>
</feature>
<feature type="compositionally biased region" description="Acidic residues" evidence="3">
    <location>
        <begin position="542"/>
        <end position="583"/>
    </location>
</feature>
<feature type="compositionally biased region" description="Basic and acidic residues" evidence="3">
    <location>
        <begin position="654"/>
        <end position="665"/>
    </location>
</feature>
<feature type="compositionally biased region" description="Acidic residues" evidence="3">
    <location>
        <begin position="666"/>
        <end position="681"/>
    </location>
</feature>
<feature type="compositionally biased region" description="Basic and acidic residues" evidence="3">
    <location>
        <begin position="682"/>
        <end position="694"/>
    </location>
</feature>
<feature type="compositionally biased region" description="Basic and acidic residues" evidence="3">
    <location>
        <begin position="727"/>
        <end position="750"/>
    </location>
</feature>
<feature type="compositionally biased region" description="Basic and acidic residues" evidence="3">
    <location>
        <begin position="760"/>
        <end position="882"/>
    </location>
</feature>
<feature type="compositionally biased region" description="Polar residues" evidence="3">
    <location>
        <begin position="1009"/>
        <end position="1021"/>
    </location>
</feature>
<feature type="compositionally biased region" description="Pro residues" evidence="3">
    <location>
        <begin position="1154"/>
        <end position="1165"/>
    </location>
</feature>
<feature type="compositionally biased region" description="Polar residues" evidence="3">
    <location>
        <begin position="1174"/>
        <end position="1187"/>
    </location>
</feature>
<feature type="compositionally biased region" description="Polar residues" evidence="3">
    <location>
        <begin position="1209"/>
        <end position="1220"/>
    </location>
</feature>
<evidence type="ECO:0000250" key="1"/>
<evidence type="ECO:0000255" key="2"/>
<evidence type="ECO:0000256" key="3">
    <source>
        <dbReference type="SAM" id="MobiDB-lite"/>
    </source>
</evidence>
<evidence type="ECO:0000305" key="4"/>
<reference key="1">
    <citation type="journal article" date="2005" name="Science">
        <title>The genome of the basidiomycetous yeast and human pathogen Cryptococcus neoformans.</title>
        <authorList>
            <person name="Loftus B.J."/>
            <person name="Fung E."/>
            <person name="Roncaglia P."/>
            <person name="Rowley D."/>
            <person name="Amedeo P."/>
            <person name="Bruno D."/>
            <person name="Vamathevan J."/>
            <person name="Miranda M."/>
            <person name="Anderson I.J."/>
            <person name="Fraser J.A."/>
            <person name="Allen J.E."/>
            <person name="Bosdet I.E."/>
            <person name="Brent M.R."/>
            <person name="Chiu R."/>
            <person name="Doering T.L."/>
            <person name="Donlin M.J."/>
            <person name="D'Souza C.A."/>
            <person name="Fox D.S."/>
            <person name="Grinberg V."/>
            <person name="Fu J."/>
            <person name="Fukushima M."/>
            <person name="Haas B.J."/>
            <person name="Huang J.C."/>
            <person name="Janbon G."/>
            <person name="Jones S.J.M."/>
            <person name="Koo H.L."/>
            <person name="Krzywinski M.I."/>
            <person name="Kwon-Chung K.J."/>
            <person name="Lengeler K.B."/>
            <person name="Maiti R."/>
            <person name="Marra M.A."/>
            <person name="Marra R.E."/>
            <person name="Mathewson C.A."/>
            <person name="Mitchell T.G."/>
            <person name="Pertea M."/>
            <person name="Riggs F.R."/>
            <person name="Salzberg S.L."/>
            <person name="Schein J.E."/>
            <person name="Shvartsbeyn A."/>
            <person name="Shin H."/>
            <person name="Shumway M."/>
            <person name="Specht C.A."/>
            <person name="Suh B.B."/>
            <person name="Tenney A."/>
            <person name="Utterback T.R."/>
            <person name="Wickes B.L."/>
            <person name="Wortman J.R."/>
            <person name="Wye N.H."/>
            <person name="Kronstad J.W."/>
            <person name="Lodge J.K."/>
            <person name="Heitman J."/>
            <person name="Davis R.W."/>
            <person name="Fraser C.M."/>
            <person name="Hyman R.W."/>
        </authorList>
    </citation>
    <scope>NUCLEOTIDE SEQUENCE [LARGE SCALE GENOMIC DNA]</scope>
    <source>
        <strain>B-3501A</strain>
    </source>
</reference>
<keyword id="KW-0175">Coiled coil</keyword>
<keyword id="KW-0963">Cytoplasm</keyword>
<keyword id="KW-0346">Stress response</keyword>
<sequence length="1353" mass="146959">MSSKSQQPPTGLSKSAAKKRAKKAAKQSQNPQPQSAPQTSSQTPASVPPLPPASVPDPLDPAFFNFPGPGSYPIDVQYDDTAYYDQVDVPLNQGDFPGSYSIDYNLSLQNGSQLAGLSAPFNITHDDLISAANELYKRMADPEFGSDDAYWSSLPPHIRQFIRDAVPFTGSISQSTPGTTSSQRTMYQMAQQIVQAASQGMGLGHGMSANLMPGINANARSFPSPQQTIGEEFGFHRHPDTREEEYDDEEEIEEDQGHPAANGDAPKKKNKKKKKKGANAASLSAPVEPPAPLPPLPPPSTLSKIPRAPAPVPQPQLPTHQPQPLSQQPPSLNPLPPPAPASAPTPTPPSSRAAGKQPMGTNPPANPPARSARAAGKAPASAAPPHNAHAGHSHNHPSTAKPAPKGKSPATAPPAKIWTQSSAEDRENIRVFWLGLSEAERRDLLRIEKDAVLKKMKEQHRHSCGCAVCGRKKVNIEMELDQLYEQYYDELRSYAAEQRVAANGLRPPPSGAGPFPGSVEVDASGTVTQYDHRAPELHDHDPDDLDGEESEEYDDDDDYADDDELDDDDIGTDEADVGDEIDEPPPPPPITHRQQPRRPPVKAPPRSEGGDDFLSFGSNLATIKGGILTIADDMLKNDGTKFLEMMEQLAIRRSVREEQNLRDMQEETDEEEEEEDDDESRDEPMTEKERAEEGKRMFQIFAARMFEQRVLQAYRERVAKQREEQLLRELEEEEDSKRAKEEKKAKEAQKKKDKKKAQKQKAEEERLAREAALEEEKRQAKLRKEEAERERMRRQDEERVRREAVKRAAQEEAQRQALERKRRQQEEKEREEEAAKKKREREEKAKKEREARENELKEKERKEREIKAAKEKAEKERIAKETLEKAERDRLAKEAKEKAEKIRQERLEASRMEKVRKEEAARKEREAVEQAKIIAAQQAQRERAAKAEKNTADKAAAERISAARVIPVAATAPVLATLGLKSPSKGSTPQSAPPVPQLSPVKGAARPITNATPGRSMQKTPTAYYPQPVPPVGVASFSRMPLAQSFGPPGLRPAYPTGSPAYSPPRANGSSISPNPPSRGFTDPSPPGFDHNLRTAPIGVGFPPVKPSGRIPSMADDAFSPTAPIGVPVTRSVSSAGEMGSLISGSVTPDDYRPTPPAPIAPPNLGPIGRPSFSDGQTSGPNVLRSTSPPPPDRVLGSAALGADDEIVQPQQRRPTTSWDMPTAAPGSGRWSASPSIWGSGDPTPAPSWGAPGSMPTVAERPGPPPGLSLSPGAGVNVLGQRQPSFGGIGSSFGGVGAVGSVIGGGMGGTAGSGLVQGHVGGGGYSQGLFSPQHQQQQQLQLQLQLQQQQQQQ</sequence>
<dbReference type="EMBL" id="AAEY01000019">
    <property type="protein sequence ID" value="EAL21451.1"/>
    <property type="molecule type" value="Genomic_DNA"/>
</dbReference>
<dbReference type="RefSeq" id="XP_776098.1">
    <property type="nucleotide sequence ID" value="XM_771005.1"/>
</dbReference>
<dbReference type="SMR" id="P0CP35"/>
<dbReference type="GeneID" id="4935535"/>
<dbReference type="KEGG" id="cnb:CNBD1460"/>
<dbReference type="VEuPathDB" id="FungiDB:CNBD1460"/>
<dbReference type="HOGENOM" id="CLU_002935_1_0_1"/>
<dbReference type="OrthoDB" id="9858at5206"/>
<dbReference type="GO" id="GO:0005737">
    <property type="term" value="C:cytoplasm"/>
    <property type="evidence" value="ECO:0007669"/>
    <property type="project" value="UniProtKB-SubCell"/>
</dbReference>
<dbReference type="GO" id="GO:0032982">
    <property type="term" value="C:myosin filament"/>
    <property type="evidence" value="ECO:0007669"/>
    <property type="project" value="TreeGrafter"/>
</dbReference>
<dbReference type="GO" id="GO:0016460">
    <property type="term" value="C:myosin II complex"/>
    <property type="evidence" value="ECO:0007669"/>
    <property type="project" value="TreeGrafter"/>
</dbReference>
<dbReference type="GO" id="GO:0051015">
    <property type="term" value="F:actin filament binding"/>
    <property type="evidence" value="ECO:0007669"/>
    <property type="project" value="TreeGrafter"/>
</dbReference>
<dbReference type="GO" id="GO:0000146">
    <property type="term" value="F:microfilament motor activity"/>
    <property type="evidence" value="ECO:0007669"/>
    <property type="project" value="TreeGrafter"/>
</dbReference>
<dbReference type="InterPro" id="IPR025279">
    <property type="entry name" value="NST1"/>
</dbReference>
<dbReference type="PANTHER" id="PTHR45615">
    <property type="entry name" value="MYOSIN HEAVY CHAIN, NON-MUSCLE"/>
    <property type="match status" value="1"/>
</dbReference>
<dbReference type="PANTHER" id="PTHR45615:SF40">
    <property type="entry name" value="MYOSIN HEAVY CHAIN, NON-MUSCLE"/>
    <property type="match status" value="1"/>
</dbReference>
<dbReference type="Pfam" id="PF13945">
    <property type="entry name" value="NST1"/>
    <property type="match status" value="1"/>
</dbReference>
<name>NST1_CRYNB</name>
<gene>
    <name type="primary">NST1</name>
    <name type="ordered locus">CNBD1460</name>
</gene>
<comment type="function">
    <text evidence="1">May act as a negative regulator of salt tolerance.</text>
</comment>
<comment type="subcellular location">
    <subcellularLocation>
        <location evidence="1">Cytoplasm</location>
    </subcellularLocation>
</comment>
<comment type="similarity">
    <text evidence="4">Belongs to the NST1 family.</text>
</comment>
<accession>P0CP35</accession>
<accession>Q55UG1</accession>
<accession>Q5KHY3</accession>